<organism>
    <name type="scientific">Dyadobacter fermentans (strain ATCC 700827 / DSM 18053 / CIP 107007 / KCTC 52180 / NS114)</name>
    <dbReference type="NCBI Taxonomy" id="471854"/>
    <lineage>
        <taxon>Bacteria</taxon>
        <taxon>Pseudomonadati</taxon>
        <taxon>Bacteroidota</taxon>
        <taxon>Cytophagia</taxon>
        <taxon>Cytophagales</taxon>
        <taxon>Spirosomataceae</taxon>
        <taxon>Dyadobacter</taxon>
    </lineage>
</organism>
<keyword id="KW-0963">Cytoplasm</keyword>
<keyword id="KW-0489">Methyltransferase</keyword>
<keyword id="KW-1185">Reference proteome</keyword>
<keyword id="KW-0949">S-adenosyl-L-methionine</keyword>
<keyword id="KW-0808">Transferase</keyword>
<keyword id="KW-0819">tRNA processing</keyword>
<feature type="chain" id="PRO_0000387349" description="tRNA1(Val) (adenine(37)-N6)-methyltransferase">
    <location>
        <begin position="1"/>
        <end position="240"/>
    </location>
</feature>
<dbReference type="EC" id="2.1.1.223" evidence="1"/>
<dbReference type="EMBL" id="CP001619">
    <property type="protein sequence ID" value="ACT96319.1"/>
    <property type="molecule type" value="Genomic_DNA"/>
</dbReference>
<dbReference type="RefSeq" id="WP_015814560.1">
    <property type="nucleotide sequence ID" value="NC_013037.1"/>
</dbReference>
<dbReference type="SMR" id="C6VS84"/>
<dbReference type="STRING" id="471854.Dfer_5119"/>
<dbReference type="KEGG" id="dfe:Dfer_5119"/>
<dbReference type="eggNOG" id="COG4123">
    <property type="taxonomic scope" value="Bacteria"/>
</dbReference>
<dbReference type="HOGENOM" id="CLU_061983_0_0_10"/>
<dbReference type="OrthoDB" id="5383291at2"/>
<dbReference type="Proteomes" id="UP000002011">
    <property type="component" value="Chromosome"/>
</dbReference>
<dbReference type="GO" id="GO:0005737">
    <property type="term" value="C:cytoplasm"/>
    <property type="evidence" value="ECO:0007669"/>
    <property type="project" value="UniProtKB-SubCell"/>
</dbReference>
<dbReference type="GO" id="GO:0003676">
    <property type="term" value="F:nucleic acid binding"/>
    <property type="evidence" value="ECO:0007669"/>
    <property type="project" value="InterPro"/>
</dbReference>
<dbReference type="GO" id="GO:0000179">
    <property type="term" value="F:rRNA (adenine-N6,N6-)-dimethyltransferase activity"/>
    <property type="evidence" value="ECO:0007669"/>
    <property type="project" value="InterPro"/>
</dbReference>
<dbReference type="GO" id="GO:0016430">
    <property type="term" value="F:tRNA (adenine-N6)-methyltransferase activity"/>
    <property type="evidence" value="ECO:0007669"/>
    <property type="project" value="UniProtKB-UniRule"/>
</dbReference>
<dbReference type="GO" id="GO:0008033">
    <property type="term" value="P:tRNA processing"/>
    <property type="evidence" value="ECO:0007669"/>
    <property type="project" value="UniProtKB-UniRule"/>
</dbReference>
<dbReference type="CDD" id="cd02440">
    <property type="entry name" value="AdoMet_MTases"/>
    <property type="match status" value="1"/>
</dbReference>
<dbReference type="Gene3D" id="3.40.50.150">
    <property type="entry name" value="Vaccinia Virus protein VP39"/>
    <property type="match status" value="1"/>
</dbReference>
<dbReference type="HAMAP" id="MF_01872">
    <property type="entry name" value="tRNA_methyltr_YfiC"/>
    <property type="match status" value="1"/>
</dbReference>
<dbReference type="InterPro" id="IPR002052">
    <property type="entry name" value="DNA_methylase_N6_adenine_CS"/>
</dbReference>
<dbReference type="InterPro" id="IPR020596">
    <property type="entry name" value="rRNA_Ade_Mease_Trfase_CS"/>
</dbReference>
<dbReference type="InterPro" id="IPR029063">
    <property type="entry name" value="SAM-dependent_MTases_sf"/>
</dbReference>
<dbReference type="InterPro" id="IPR007848">
    <property type="entry name" value="Small_mtfrase_dom"/>
</dbReference>
<dbReference type="InterPro" id="IPR050210">
    <property type="entry name" value="tRNA_Adenine-N(6)_MTase"/>
</dbReference>
<dbReference type="InterPro" id="IPR022882">
    <property type="entry name" value="tRNA_adenine-N6_MeTrfase"/>
</dbReference>
<dbReference type="PANTHER" id="PTHR47739">
    <property type="entry name" value="TRNA1(VAL) (ADENINE(37)-N6)-METHYLTRANSFERASE"/>
    <property type="match status" value="1"/>
</dbReference>
<dbReference type="PANTHER" id="PTHR47739:SF1">
    <property type="entry name" value="TRNA1(VAL) (ADENINE(37)-N6)-METHYLTRANSFERASE"/>
    <property type="match status" value="1"/>
</dbReference>
<dbReference type="Pfam" id="PF05175">
    <property type="entry name" value="MTS"/>
    <property type="match status" value="1"/>
</dbReference>
<dbReference type="SUPFAM" id="SSF53335">
    <property type="entry name" value="S-adenosyl-L-methionine-dependent methyltransferases"/>
    <property type="match status" value="1"/>
</dbReference>
<dbReference type="PROSITE" id="PS00092">
    <property type="entry name" value="N6_MTASE"/>
    <property type="match status" value="1"/>
</dbReference>
<evidence type="ECO:0000255" key="1">
    <source>
        <dbReference type="HAMAP-Rule" id="MF_01872"/>
    </source>
</evidence>
<sequence length="240" mass="27678">MPRNAHFRFKQFTVRQDQCAMKVCTDACVLGAWADVEDADRILDIGAGTGLLSLMVAQRNTYAMIDAVEIDAEAFYQAGENVEQSPFHDRITLFHSAVQEFVSEHRYDVIITNPPFFQSDLLSPIDKKNIAHHAKSLDFEELLTAIERLLKPEGKFNILFPVDEGSRFAEKAAHAGWKLTRKLTLFHQEDKKAFRLLMRFERAEVAHNVIVEPDLYIYEKDGVTHDPRFRELLKAFYLKF</sequence>
<comment type="function">
    <text evidence="1">Specifically methylates the adenine in position 37 of tRNA(1)(Val) (anticodon cmo5UAC).</text>
</comment>
<comment type="catalytic activity">
    <reaction evidence="1">
        <text>adenosine(37) in tRNA1(Val) + S-adenosyl-L-methionine = N(6)-methyladenosine(37) in tRNA1(Val) + S-adenosyl-L-homocysteine + H(+)</text>
        <dbReference type="Rhea" id="RHEA:43160"/>
        <dbReference type="Rhea" id="RHEA-COMP:10369"/>
        <dbReference type="Rhea" id="RHEA-COMP:10370"/>
        <dbReference type="ChEBI" id="CHEBI:15378"/>
        <dbReference type="ChEBI" id="CHEBI:57856"/>
        <dbReference type="ChEBI" id="CHEBI:59789"/>
        <dbReference type="ChEBI" id="CHEBI:74411"/>
        <dbReference type="ChEBI" id="CHEBI:74449"/>
        <dbReference type="EC" id="2.1.1.223"/>
    </reaction>
</comment>
<comment type="subcellular location">
    <subcellularLocation>
        <location evidence="1">Cytoplasm</location>
    </subcellularLocation>
</comment>
<comment type="similarity">
    <text evidence="1">Belongs to the methyltransferase superfamily. tRNA (adenine-N(6)-)-methyltransferase family.</text>
</comment>
<gene>
    <name type="ordered locus">Dfer_5119</name>
</gene>
<proteinExistence type="inferred from homology"/>
<accession>C6VS84</accession>
<reference key="1">
    <citation type="journal article" date="2009" name="Stand. Genomic Sci.">
        <title>Complete genome sequence of Dyadobacter fermentans type strain (NS114).</title>
        <authorList>
            <person name="Lang E."/>
            <person name="Lapidus A."/>
            <person name="Chertkov O."/>
            <person name="Brettin T."/>
            <person name="Detter J.C."/>
            <person name="Han C."/>
            <person name="Copeland A."/>
            <person name="Glavina Del Rio T."/>
            <person name="Nolan M."/>
            <person name="Chen F."/>
            <person name="Lucas S."/>
            <person name="Tice H."/>
            <person name="Cheng J.F."/>
            <person name="Land M."/>
            <person name="Hauser L."/>
            <person name="Chang Y.J."/>
            <person name="Jeffries C.D."/>
            <person name="Kopitz M."/>
            <person name="Bruce D."/>
            <person name="Goodwin L."/>
            <person name="Pitluck S."/>
            <person name="Ovchinnikova G."/>
            <person name="Pati A."/>
            <person name="Ivanova N."/>
            <person name="Mavrommatis K."/>
            <person name="Chen A."/>
            <person name="Palaniappan K."/>
            <person name="Chain P."/>
            <person name="Bristow J."/>
            <person name="Eisen J.A."/>
            <person name="Markowitz V."/>
            <person name="Hugenholtz P."/>
            <person name="Goker M."/>
            <person name="Rohde M."/>
            <person name="Kyrpides N.C."/>
            <person name="Klenk H.P."/>
        </authorList>
    </citation>
    <scope>NUCLEOTIDE SEQUENCE [LARGE SCALE GENOMIC DNA]</scope>
    <source>
        <strain>ATCC 700827 / DSM 18053 / CIP 107007 / KCTC 52180 / NS114</strain>
    </source>
</reference>
<protein>
    <recommendedName>
        <fullName evidence="1">tRNA1(Val) (adenine(37)-N6)-methyltransferase</fullName>
        <ecNumber evidence="1">2.1.1.223</ecNumber>
    </recommendedName>
    <alternativeName>
        <fullName evidence="1">tRNA m6A37 methyltransferase</fullName>
    </alternativeName>
</protein>
<name>TRMN6_DYAFD</name>